<evidence type="ECO:0000255" key="1">
    <source>
        <dbReference type="HAMAP-Rule" id="MF_00046"/>
    </source>
</evidence>
<name>MURC_TREPA</name>
<organism>
    <name type="scientific">Treponema pallidum (strain Nichols)</name>
    <dbReference type="NCBI Taxonomy" id="243276"/>
    <lineage>
        <taxon>Bacteria</taxon>
        <taxon>Pseudomonadati</taxon>
        <taxon>Spirochaetota</taxon>
        <taxon>Spirochaetia</taxon>
        <taxon>Spirochaetales</taxon>
        <taxon>Treponemataceae</taxon>
        <taxon>Treponema</taxon>
    </lineage>
</organism>
<gene>
    <name evidence="1" type="primary">murC</name>
    <name type="ordered locus">TP_0341</name>
</gene>
<keyword id="KW-0067">ATP-binding</keyword>
<keyword id="KW-0131">Cell cycle</keyword>
<keyword id="KW-0132">Cell division</keyword>
<keyword id="KW-0133">Cell shape</keyword>
<keyword id="KW-0961">Cell wall biogenesis/degradation</keyword>
<keyword id="KW-0963">Cytoplasm</keyword>
<keyword id="KW-0436">Ligase</keyword>
<keyword id="KW-0547">Nucleotide-binding</keyword>
<keyword id="KW-0573">Peptidoglycan synthesis</keyword>
<keyword id="KW-1185">Reference proteome</keyword>
<reference key="1">
    <citation type="journal article" date="1998" name="Science">
        <title>Complete genome sequence of Treponema pallidum, the syphilis spirochete.</title>
        <authorList>
            <person name="Fraser C.M."/>
            <person name="Norris S.J."/>
            <person name="Weinstock G.M."/>
            <person name="White O."/>
            <person name="Sutton G.G."/>
            <person name="Dodson R.J."/>
            <person name="Gwinn M.L."/>
            <person name="Hickey E.K."/>
            <person name="Clayton R.A."/>
            <person name="Ketchum K.A."/>
            <person name="Sodergren E."/>
            <person name="Hardham J.M."/>
            <person name="McLeod M.P."/>
            <person name="Salzberg S.L."/>
            <person name="Peterson J.D."/>
            <person name="Khalak H.G."/>
            <person name="Richardson D.L."/>
            <person name="Howell J.K."/>
            <person name="Chidambaram M."/>
            <person name="Utterback T.R."/>
            <person name="McDonald L.A."/>
            <person name="Artiach P."/>
            <person name="Bowman C."/>
            <person name="Cotton M.D."/>
            <person name="Fujii C."/>
            <person name="Garland S.A."/>
            <person name="Hatch B."/>
            <person name="Horst K."/>
            <person name="Roberts K.M."/>
            <person name="Sandusky M."/>
            <person name="Weidman J.F."/>
            <person name="Smith H.O."/>
            <person name="Venter J.C."/>
        </authorList>
    </citation>
    <scope>NUCLEOTIDE SEQUENCE [LARGE SCALE GENOMIC DNA]</scope>
    <source>
        <strain>Nichols</strain>
    </source>
</reference>
<comment type="function">
    <text evidence="1">Cell wall formation.</text>
</comment>
<comment type="catalytic activity">
    <reaction evidence="1">
        <text>UDP-N-acetyl-alpha-D-muramate + L-alanine + ATP = UDP-N-acetyl-alpha-D-muramoyl-L-alanine + ADP + phosphate + H(+)</text>
        <dbReference type="Rhea" id="RHEA:23372"/>
        <dbReference type="ChEBI" id="CHEBI:15378"/>
        <dbReference type="ChEBI" id="CHEBI:30616"/>
        <dbReference type="ChEBI" id="CHEBI:43474"/>
        <dbReference type="ChEBI" id="CHEBI:57972"/>
        <dbReference type="ChEBI" id="CHEBI:70757"/>
        <dbReference type="ChEBI" id="CHEBI:83898"/>
        <dbReference type="ChEBI" id="CHEBI:456216"/>
        <dbReference type="EC" id="6.3.2.8"/>
    </reaction>
</comment>
<comment type="pathway">
    <text evidence="1">Cell wall biogenesis; peptidoglycan biosynthesis.</text>
</comment>
<comment type="subcellular location">
    <subcellularLocation>
        <location evidence="1">Cytoplasm</location>
    </subcellularLocation>
</comment>
<comment type="similarity">
    <text evidence="1">Belongs to the MurCDEF family.</text>
</comment>
<protein>
    <recommendedName>
        <fullName evidence="1">UDP-N-acetylmuramate--L-alanine ligase</fullName>
        <ecNumber evidence="1">6.3.2.8</ecNumber>
    </recommendedName>
    <alternativeName>
        <fullName evidence="1">UDP-N-acetylmuramoyl-L-alanine synthetase</fullName>
    </alternativeName>
</protein>
<dbReference type="EC" id="6.3.2.8" evidence="1"/>
<dbReference type="EMBL" id="AE000520">
    <property type="protein sequence ID" value="AAC65326.1"/>
    <property type="molecule type" value="Genomic_DNA"/>
</dbReference>
<dbReference type="PIR" id="C71338">
    <property type="entry name" value="C71338"/>
</dbReference>
<dbReference type="RefSeq" id="WP_010881789.1">
    <property type="nucleotide sequence ID" value="NC_021490.2"/>
</dbReference>
<dbReference type="SMR" id="O83361"/>
<dbReference type="IntAct" id="O83361">
    <property type="interactions" value="17"/>
</dbReference>
<dbReference type="STRING" id="243276.TP_0341"/>
<dbReference type="EnsemblBacteria" id="AAC65326">
    <property type="protein sequence ID" value="AAC65326"/>
    <property type="gene ID" value="TP_0341"/>
</dbReference>
<dbReference type="GeneID" id="93876120"/>
<dbReference type="KEGG" id="tpa:TP_0341"/>
<dbReference type="KEGG" id="tpw:TPANIC_0341"/>
<dbReference type="eggNOG" id="COG0773">
    <property type="taxonomic scope" value="Bacteria"/>
</dbReference>
<dbReference type="HOGENOM" id="CLU_028104_2_2_12"/>
<dbReference type="OrthoDB" id="9804126at2"/>
<dbReference type="UniPathway" id="UPA00219"/>
<dbReference type="Proteomes" id="UP000000811">
    <property type="component" value="Chromosome"/>
</dbReference>
<dbReference type="GO" id="GO:0005737">
    <property type="term" value="C:cytoplasm"/>
    <property type="evidence" value="ECO:0007669"/>
    <property type="project" value="UniProtKB-SubCell"/>
</dbReference>
<dbReference type="GO" id="GO:0005524">
    <property type="term" value="F:ATP binding"/>
    <property type="evidence" value="ECO:0007669"/>
    <property type="project" value="UniProtKB-UniRule"/>
</dbReference>
<dbReference type="GO" id="GO:0008763">
    <property type="term" value="F:UDP-N-acetylmuramate-L-alanine ligase activity"/>
    <property type="evidence" value="ECO:0007669"/>
    <property type="project" value="UniProtKB-UniRule"/>
</dbReference>
<dbReference type="GO" id="GO:0051301">
    <property type="term" value="P:cell division"/>
    <property type="evidence" value="ECO:0007669"/>
    <property type="project" value="UniProtKB-KW"/>
</dbReference>
<dbReference type="GO" id="GO:0071555">
    <property type="term" value="P:cell wall organization"/>
    <property type="evidence" value="ECO:0007669"/>
    <property type="project" value="UniProtKB-KW"/>
</dbReference>
<dbReference type="GO" id="GO:0009252">
    <property type="term" value="P:peptidoglycan biosynthetic process"/>
    <property type="evidence" value="ECO:0007669"/>
    <property type="project" value="UniProtKB-UniRule"/>
</dbReference>
<dbReference type="GO" id="GO:0008360">
    <property type="term" value="P:regulation of cell shape"/>
    <property type="evidence" value="ECO:0007669"/>
    <property type="project" value="UniProtKB-KW"/>
</dbReference>
<dbReference type="Gene3D" id="3.90.190.20">
    <property type="entry name" value="Mur ligase, C-terminal domain"/>
    <property type="match status" value="1"/>
</dbReference>
<dbReference type="Gene3D" id="3.40.1190.10">
    <property type="entry name" value="Mur-like, catalytic domain"/>
    <property type="match status" value="1"/>
</dbReference>
<dbReference type="Gene3D" id="3.40.50.720">
    <property type="entry name" value="NAD(P)-binding Rossmann-like Domain"/>
    <property type="match status" value="1"/>
</dbReference>
<dbReference type="HAMAP" id="MF_00046">
    <property type="entry name" value="MurC"/>
    <property type="match status" value="1"/>
</dbReference>
<dbReference type="InterPro" id="IPR036565">
    <property type="entry name" value="Mur-like_cat_sf"/>
</dbReference>
<dbReference type="InterPro" id="IPR004101">
    <property type="entry name" value="Mur_ligase_C"/>
</dbReference>
<dbReference type="InterPro" id="IPR036615">
    <property type="entry name" value="Mur_ligase_C_dom_sf"/>
</dbReference>
<dbReference type="InterPro" id="IPR013221">
    <property type="entry name" value="Mur_ligase_cen"/>
</dbReference>
<dbReference type="InterPro" id="IPR000713">
    <property type="entry name" value="Mur_ligase_N"/>
</dbReference>
<dbReference type="InterPro" id="IPR050061">
    <property type="entry name" value="MurCDEF_pg_biosynth"/>
</dbReference>
<dbReference type="InterPro" id="IPR005758">
    <property type="entry name" value="UDP-N-AcMur_Ala_ligase_MurC"/>
</dbReference>
<dbReference type="NCBIfam" id="TIGR01082">
    <property type="entry name" value="murC"/>
    <property type="match status" value="1"/>
</dbReference>
<dbReference type="PANTHER" id="PTHR43445:SF3">
    <property type="entry name" value="UDP-N-ACETYLMURAMATE--L-ALANINE LIGASE"/>
    <property type="match status" value="1"/>
</dbReference>
<dbReference type="PANTHER" id="PTHR43445">
    <property type="entry name" value="UDP-N-ACETYLMURAMATE--L-ALANINE LIGASE-RELATED"/>
    <property type="match status" value="1"/>
</dbReference>
<dbReference type="Pfam" id="PF01225">
    <property type="entry name" value="Mur_ligase"/>
    <property type="match status" value="1"/>
</dbReference>
<dbReference type="Pfam" id="PF02875">
    <property type="entry name" value="Mur_ligase_C"/>
    <property type="match status" value="1"/>
</dbReference>
<dbReference type="Pfam" id="PF08245">
    <property type="entry name" value="Mur_ligase_M"/>
    <property type="match status" value="1"/>
</dbReference>
<dbReference type="SUPFAM" id="SSF51984">
    <property type="entry name" value="MurCD N-terminal domain"/>
    <property type="match status" value="1"/>
</dbReference>
<dbReference type="SUPFAM" id="SSF53623">
    <property type="entry name" value="MurD-like peptide ligases, catalytic domain"/>
    <property type="match status" value="1"/>
</dbReference>
<dbReference type="SUPFAM" id="SSF53244">
    <property type="entry name" value="MurD-like peptide ligases, peptide-binding domain"/>
    <property type="match status" value="1"/>
</dbReference>
<feature type="chain" id="PRO_0000182179" description="UDP-N-acetylmuramate--L-alanine ligase">
    <location>
        <begin position="1"/>
        <end position="481"/>
    </location>
</feature>
<feature type="binding site" evidence="1">
    <location>
        <begin position="122"/>
        <end position="128"/>
    </location>
    <ligand>
        <name>ATP</name>
        <dbReference type="ChEBI" id="CHEBI:30616"/>
    </ligand>
</feature>
<proteinExistence type="inferred from homology"/>
<accession>O83361</accession>
<sequence length="481" mass="53762">MKRGTLPKDVSGIKIHMIGIKGTGMSALAELLCARGARVSGSDVADVFYTDRILARLGVPVRTPFSCQNLADAPDVVIHSAAYVPEENDELAEAYRRGIPTLTYPEALGDISCARFSCGIAGVHGKTTTTAMIAQMVKELRLDASVLVGSAVSGNNDSCVVLNGDTFFIAETCEYRRHFLHFHPQKIVLTSVEHDHQDYYSSYEDILAAYFHYIDRLPQFGELFYCVDDQGVREVVQLAFFSRPDLVYVPYGERAWGDYGVSIHGVQDRKISFSLRGFAGEFYVALPGEHSVLNATGALALALSLVKKQYGEVTVEHLTALRKVLALFQGCRRRSEVLGEVRGILFMDDYGHHPTAIKKTLRGLKTFFPERRIVVDFMSHTYSRTAALLTEFAESFQDADVVILHEIYASAREVYQGEVNGEHLFELTKRKHRRVYYYEAVMQAVPFLQAELKEGDLFVTLGAGDNCKLGEVLFNYFKEEV</sequence>